<name>UVRB_CLOBB</name>
<comment type="function">
    <text evidence="1">The UvrABC repair system catalyzes the recognition and processing of DNA lesions. A damage recognition complex composed of 2 UvrA and 2 UvrB subunits scans DNA for abnormalities. Upon binding of the UvrA(2)B(2) complex to a putative damaged site, the DNA wraps around one UvrB monomer. DNA wrap is dependent on ATP binding by UvrB and probably causes local melting of the DNA helix, facilitating insertion of UvrB beta-hairpin between the DNA strands. Then UvrB probes one DNA strand for the presence of a lesion. If a lesion is found the UvrA subunits dissociate and the UvrB-DNA preincision complex is formed. This complex is subsequently bound by UvrC and the second UvrB is released. If no lesion is found, the DNA wraps around the other UvrB subunit that will check the other stand for damage.</text>
</comment>
<comment type="subunit">
    <text evidence="1">Forms a heterotetramer with UvrA during the search for lesions. Interacts with UvrC in an incision complex.</text>
</comment>
<comment type="subcellular location">
    <subcellularLocation>
        <location evidence="1">Cytoplasm</location>
    </subcellularLocation>
</comment>
<comment type="domain">
    <text evidence="1">The beta-hairpin motif is involved in DNA binding.</text>
</comment>
<comment type="similarity">
    <text evidence="1">Belongs to the UvrB family.</text>
</comment>
<organism>
    <name type="scientific">Clostridium botulinum (strain Eklund 17B / Type B)</name>
    <dbReference type="NCBI Taxonomy" id="935198"/>
    <lineage>
        <taxon>Bacteria</taxon>
        <taxon>Bacillati</taxon>
        <taxon>Bacillota</taxon>
        <taxon>Clostridia</taxon>
        <taxon>Eubacteriales</taxon>
        <taxon>Clostridiaceae</taxon>
        <taxon>Clostridium</taxon>
    </lineage>
</organism>
<accession>B2TQS8</accession>
<dbReference type="EMBL" id="CP001056">
    <property type="protein sequence ID" value="ACD23030.1"/>
    <property type="molecule type" value="Genomic_DNA"/>
</dbReference>
<dbReference type="SMR" id="B2TQS8"/>
<dbReference type="KEGG" id="cbk:CLL_A3349"/>
<dbReference type="PATRIC" id="fig|935198.13.peg.3315"/>
<dbReference type="HOGENOM" id="CLU_009621_2_1_9"/>
<dbReference type="Proteomes" id="UP000001195">
    <property type="component" value="Chromosome"/>
</dbReference>
<dbReference type="GO" id="GO:0005737">
    <property type="term" value="C:cytoplasm"/>
    <property type="evidence" value="ECO:0007669"/>
    <property type="project" value="UniProtKB-SubCell"/>
</dbReference>
<dbReference type="GO" id="GO:0009380">
    <property type="term" value="C:excinuclease repair complex"/>
    <property type="evidence" value="ECO:0007669"/>
    <property type="project" value="InterPro"/>
</dbReference>
<dbReference type="GO" id="GO:0005524">
    <property type="term" value="F:ATP binding"/>
    <property type="evidence" value="ECO:0007669"/>
    <property type="project" value="UniProtKB-UniRule"/>
</dbReference>
<dbReference type="GO" id="GO:0016887">
    <property type="term" value="F:ATP hydrolysis activity"/>
    <property type="evidence" value="ECO:0007669"/>
    <property type="project" value="InterPro"/>
</dbReference>
<dbReference type="GO" id="GO:0003677">
    <property type="term" value="F:DNA binding"/>
    <property type="evidence" value="ECO:0007669"/>
    <property type="project" value="UniProtKB-UniRule"/>
</dbReference>
<dbReference type="GO" id="GO:0009381">
    <property type="term" value="F:excinuclease ABC activity"/>
    <property type="evidence" value="ECO:0007669"/>
    <property type="project" value="UniProtKB-UniRule"/>
</dbReference>
<dbReference type="GO" id="GO:0004386">
    <property type="term" value="F:helicase activity"/>
    <property type="evidence" value="ECO:0007669"/>
    <property type="project" value="UniProtKB-KW"/>
</dbReference>
<dbReference type="GO" id="GO:0006289">
    <property type="term" value="P:nucleotide-excision repair"/>
    <property type="evidence" value="ECO:0007669"/>
    <property type="project" value="UniProtKB-UniRule"/>
</dbReference>
<dbReference type="GO" id="GO:0009432">
    <property type="term" value="P:SOS response"/>
    <property type="evidence" value="ECO:0007669"/>
    <property type="project" value="UniProtKB-UniRule"/>
</dbReference>
<dbReference type="CDD" id="cd17916">
    <property type="entry name" value="DEXHc_UvrB"/>
    <property type="match status" value="1"/>
</dbReference>
<dbReference type="CDD" id="cd18790">
    <property type="entry name" value="SF2_C_UvrB"/>
    <property type="match status" value="1"/>
</dbReference>
<dbReference type="Gene3D" id="3.40.50.300">
    <property type="entry name" value="P-loop containing nucleotide triphosphate hydrolases"/>
    <property type="match status" value="3"/>
</dbReference>
<dbReference type="Gene3D" id="4.10.860.10">
    <property type="entry name" value="UVR domain"/>
    <property type="match status" value="1"/>
</dbReference>
<dbReference type="HAMAP" id="MF_00204">
    <property type="entry name" value="UvrB"/>
    <property type="match status" value="1"/>
</dbReference>
<dbReference type="InterPro" id="IPR006935">
    <property type="entry name" value="Helicase/UvrB_N"/>
</dbReference>
<dbReference type="InterPro" id="IPR014001">
    <property type="entry name" value="Helicase_ATP-bd"/>
</dbReference>
<dbReference type="InterPro" id="IPR001650">
    <property type="entry name" value="Helicase_C-like"/>
</dbReference>
<dbReference type="InterPro" id="IPR027417">
    <property type="entry name" value="P-loop_NTPase"/>
</dbReference>
<dbReference type="InterPro" id="IPR001943">
    <property type="entry name" value="UVR_dom"/>
</dbReference>
<dbReference type="InterPro" id="IPR036876">
    <property type="entry name" value="UVR_dom_sf"/>
</dbReference>
<dbReference type="InterPro" id="IPR004807">
    <property type="entry name" value="UvrB"/>
</dbReference>
<dbReference type="InterPro" id="IPR041471">
    <property type="entry name" value="UvrB_inter"/>
</dbReference>
<dbReference type="InterPro" id="IPR024759">
    <property type="entry name" value="UvrB_YAD/RRR_dom"/>
</dbReference>
<dbReference type="NCBIfam" id="NF003673">
    <property type="entry name" value="PRK05298.1"/>
    <property type="match status" value="1"/>
</dbReference>
<dbReference type="NCBIfam" id="TIGR00631">
    <property type="entry name" value="uvrb"/>
    <property type="match status" value="1"/>
</dbReference>
<dbReference type="PANTHER" id="PTHR24029">
    <property type="entry name" value="UVRABC SYSTEM PROTEIN B"/>
    <property type="match status" value="1"/>
</dbReference>
<dbReference type="PANTHER" id="PTHR24029:SF0">
    <property type="entry name" value="UVRABC SYSTEM PROTEIN B"/>
    <property type="match status" value="1"/>
</dbReference>
<dbReference type="Pfam" id="PF00271">
    <property type="entry name" value="Helicase_C"/>
    <property type="match status" value="1"/>
</dbReference>
<dbReference type="Pfam" id="PF04851">
    <property type="entry name" value="ResIII"/>
    <property type="match status" value="1"/>
</dbReference>
<dbReference type="Pfam" id="PF02151">
    <property type="entry name" value="UVR"/>
    <property type="match status" value="1"/>
</dbReference>
<dbReference type="Pfam" id="PF12344">
    <property type="entry name" value="UvrB"/>
    <property type="match status" value="1"/>
</dbReference>
<dbReference type="Pfam" id="PF17757">
    <property type="entry name" value="UvrB_inter"/>
    <property type="match status" value="1"/>
</dbReference>
<dbReference type="SMART" id="SM00487">
    <property type="entry name" value="DEXDc"/>
    <property type="match status" value="1"/>
</dbReference>
<dbReference type="SMART" id="SM00490">
    <property type="entry name" value="HELICc"/>
    <property type="match status" value="1"/>
</dbReference>
<dbReference type="SUPFAM" id="SSF46600">
    <property type="entry name" value="C-terminal UvrC-binding domain of UvrB"/>
    <property type="match status" value="1"/>
</dbReference>
<dbReference type="SUPFAM" id="SSF52540">
    <property type="entry name" value="P-loop containing nucleoside triphosphate hydrolases"/>
    <property type="match status" value="2"/>
</dbReference>
<dbReference type="PROSITE" id="PS51192">
    <property type="entry name" value="HELICASE_ATP_BIND_1"/>
    <property type="match status" value="1"/>
</dbReference>
<dbReference type="PROSITE" id="PS51194">
    <property type="entry name" value="HELICASE_CTER"/>
    <property type="match status" value="1"/>
</dbReference>
<dbReference type="PROSITE" id="PS50151">
    <property type="entry name" value="UVR"/>
    <property type="match status" value="1"/>
</dbReference>
<gene>
    <name evidence="1" type="primary">uvrB</name>
    <name type="ordered locus">CLL_A3349</name>
</gene>
<protein>
    <recommendedName>
        <fullName evidence="1">UvrABC system protein B</fullName>
        <shortName evidence="1">Protein UvrB</shortName>
    </recommendedName>
    <alternativeName>
        <fullName evidence="1">Excinuclease ABC subunit B</fullName>
    </alternativeName>
</protein>
<evidence type="ECO:0000255" key="1">
    <source>
        <dbReference type="HAMAP-Rule" id="MF_00204"/>
    </source>
</evidence>
<feature type="chain" id="PRO_1000099543" description="UvrABC system protein B">
    <location>
        <begin position="1"/>
        <end position="657"/>
    </location>
</feature>
<feature type="domain" description="Helicase ATP-binding" evidence="1">
    <location>
        <begin position="25"/>
        <end position="182"/>
    </location>
</feature>
<feature type="domain" description="Helicase C-terminal" evidence="1">
    <location>
        <begin position="429"/>
        <end position="595"/>
    </location>
</feature>
<feature type="domain" description="UVR" evidence="1">
    <location>
        <begin position="621"/>
        <end position="656"/>
    </location>
</feature>
<feature type="short sequence motif" description="Beta-hairpin">
    <location>
        <begin position="91"/>
        <end position="114"/>
    </location>
</feature>
<feature type="binding site" evidence="1">
    <location>
        <begin position="38"/>
        <end position="45"/>
    </location>
    <ligand>
        <name>ATP</name>
        <dbReference type="ChEBI" id="CHEBI:30616"/>
    </ligand>
</feature>
<reference key="1">
    <citation type="submission" date="2008-04" db="EMBL/GenBank/DDBJ databases">
        <title>Complete sequence of Clostridium botulinum strain Eklund.</title>
        <authorList>
            <person name="Brinkac L.M."/>
            <person name="Brown J.L."/>
            <person name="Bruce D."/>
            <person name="Detter C."/>
            <person name="Munk C."/>
            <person name="Smith L.A."/>
            <person name="Smith T.J."/>
            <person name="Sutton G."/>
            <person name="Brettin T.S."/>
        </authorList>
    </citation>
    <scope>NUCLEOTIDE SEQUENCE [LARGE SCALE GENOMIC DNA]</scope>
    <source>
        <strain>Eklund 17B / Type B</strain>
    </source>
</reference>
<sequence>MGEFKIHSKFKPMGDQPQAIDTILKSIKQGNEFQTLLGVTGSGKTFTMANIIENLQRPTLILAHNKTLAAQLCSEFKEFFPENIVEYFVSYYDYYQPEAYVPQTDTFIEKDASINDEIDKLRHSATSALFERRDVIIVASVSCIYGLGNPDEYKKLTISLRKGMQKERDEIIKKLIEIQYERNDIDFSRGTFRVRGDLLDIIPSSTSSKGIRIEFFGDEIDRIREFDVLTGTIIGERNHVSIFPASHFATSKETVERSLGEIENELENRLRELNSQEKLLEAQRLRQRTNFDIEMIREMGYCSGIENYSRILDGRAPGTPPKTLIDYFPEDFLLFIDESHVTLPQVRAMYAGDRSRKNTLVDYGFRLPCAYDNRPLKFEEFEKKINQVMFVSATPAQYELEHSQSIAEQVIRPTGLLDPEIIIKPVKGQIDDLYTEIQETISRGYRILITTLTKRMAEDLTKYMIELGVKATYMHSDIDTIERMKIIRDLRLGEYDVLVGINLLREGLDIPEVALVAILDADKEGFLRSETSLIQTIGRAARNSESKVIMYADNITKSMKKAISETERRRKIQTEYNEEHGIIPQTINKEVRELIEATKVAEESTEYGMEVTKSLTKKEAKKLIKEYTDEMKLAAKNLQFERAAQLRDKIEELKGKE</sequence>
<proteinExistence type="inferred from homology"/>
<keyword id="KW-0067">ATP-binding</keyword>
<keyword id="KW-0963">Cytoplasm</keyword>
<keyword id="KW-0227">DNA damage</keyword>
<keyword id="KW-0228">DNA excision</keyword>
<keyword id="KW-0234">DNA repair</keyword>
<keyword id="KW-0267">Excision nuclease</keyword>
<keyword id="KW-0347">Helicase</keyword>
<keyword id="KW-0378">Hydrolase</keyword>
<keyword id="KW-0547">Nucleotide-binding</keyword>
<keyword id="KW-0742">SOS response</keyword>